<name>NONA_DROVI</name>
<accession>Q9GRW7</accession>
<evidence type="ECO:0000250" key="1"/>
<evidence type="ECO:0000255" key="2"/>
<evidence type="ECO:0000255" key="3">
    <source>
        <dbReference type="PROSITE-ProRule" id="PRU00176"/>
    </source>
</evidence>
<evidence type="ECO:0000256" key="4">
    <source>
        <dbReference type="SAM" id="MobiDB-lite"/>
    </source>
</evidence>
<sequence length="697" mass="75337">MENSVKMDNSGNSTPLPQRQRRANNQPNKNIGKLGPQKQNEGASDGGPAEKRQRFGPNNQNGGGGSVVGGGGGGGGGGGQNQNKNFANKGGFGGGGNRNRNRGGNQNRSNFQNQNQNQKSTTDAPKADGGNLNDKSNEANNANQSNSNSAAQAQAQLQAQAQAHAQAQAQAQAQAHAQAQAQAHAHAQNQAFRARGGGGGGGGGGGGGGGGGGGGGGGGGGGGGRDRNPDRRGGGGGGGQNSGGGNNSQRGDDFFYSQRLRSISGPTHELPPIEVAQETKFSGRNRLYVGNLTNDITDEELREMFKPYGEIGEIFSNLEKNFTFLKVDYHINAEKAKRPLDGSMRKGRHVRVRFAPNATILRVSNLTPFVSNELLYKSFEIFGPIERASITVDDRGKHLGEGTVEFAKKSSASACLRLCNEKCFFLTASLRPCLVEPMEVNDDNDGLPEKALNKKLQEFNQERSVGPRFADLNSFEHEYGSRWKQLHDLFKSKQDALKRELKMEEEKLDAQMEYARYEQETELLRQELRKRESDNERKKLEWEMREKQAEEMRKREEETMRRHQTEMQSRMVRQEEDMRRRQQENTLFMQAQQLNSLLDQQEGFGGGNGGGGGGGGGGGGVGNSNFDNFGGNSNSPFEVFRGNNNSSMAGNNAGPGANNQQQDSFAAFEFGVNNMNQGGNQRGNNGGNNVPWGRRRF</sequence>
<keyword id="KW-0175">Coiled coil</keyword>
<keyword id="KW-0677">Repeat</keyword>
<keyword id="KW-0694">RNA-binding</keyword>
<keyword id="KW-0716">Sensory transduction</keyword>
<keyword id="KW-0844">Vision</keyword>
<comment type="function">
    <text evidence="1">Required for normal vision and courtship behavior in Drosophila.</text>
</comment>
<protein>
    <recommendedName>
        <fullName>Protein no-on-transient A</fullName>
    </recommendedName>
</protein>
<proteinExistence type="evidence at transcript level"/>
<organism>
    <name type="scientific">Drosophila virilis</name>
    <name type="common">Fruit fly</name>
    <dbReference type="NCBI Taxonomy" id="7244"/>
    <lineage>
        <taxon>Eukaryota</taxon>
        <taxon>Metazoa</taxon>
        <taxon>Ecdysozoa</taxon>
        <taxon>Arthropoda</taxon>
        <taxon>Hexapoda</taxon>
        <taxon>Insecta</taxon>
        <taxon>Pterygota</taxon>
        <taxon>Neoptera</taxon>
        <taxon>Endopterygota</taxon>
        <taxon>Diptera</taxon>
        <taxon>Brachycera</taxon>
        <taxon>Muscomorpha</taxon>
        <taxon>Ephydroidea</taxon>
        <taxon>Drosophilidae</taxon>
        <taxon>Drosophila</taxon>
    </lineage>
</organism>
<reference key="1">
    <citation type="journal article" date="2001" name="Genetics">
        <title>Comparative analysis of the nonA region in Drosophila identifies a highly diverged 5' gene that may constrain nonA promoter evolution.</title>
        <authorList>
            <person name="Campesan S."/>
            <person name="Chalmers D."/>
            <person name="Sandrelli F."/>
            <person name="Megighian A."/>
            <person name="Peixoto A.A."/>
            <person name="Costa R."/>
            <person name="Kyriacou C.P."/>
        </authorList>
    </citation>
    <scope>NUCLEOTIDE SEQUENCE [MRNA]</scope>
</reference>
<feature type="chain" id="PRO_0000081663" description="Protein no-on-transient A">
    <location>
        <begin position="1"/>
        <end position="697"/>
    </location>
</feature>
<feature type="domain" description="RRM 1" evidence="3">
    <location>
        <begin position="285"/>
        <end position="357"/>
    </location>
</feature>
<feature type="domain" description="RRM 2" evidence="3">
    <location>
        <begin position="359"/>
        <end position="445"/>
    </location>
</feature>
<feature type="region of interest" description="Disordered" evidence="4">
    <location>
        <begin position="1"/>
        <end position="253"/>
    </location>
</feature>
<feature type="region of interest" description="Disordered" evidence="4">
    <location>
        <begin position="551"/>
        <end position="575"/>
    </location>
</feature>
<feature type="region of interest" description="Disordered" evidence="4">
    <location>
        <begin position="601"/>
        <end position="697"/>
    </location>
</feature>
<feature type="coiled-coil region" evidence="2">
    <location>
        <begin position="488"/>
        <end position="586"/>
    </location>
</feature>
<feature type="compositionally biased region" description="Polar residues" evidence="4">
    <location>
        <begin position="1"/>
        <end position="29"/>
    </location>
</feature>
<feature type="compositionally biased region" description="Gly residues" evidence="4">
    <location>
        <begin position="61"/>
        <end position="80"/>
    </location>
</feature>
<feature type="compositionally biased region" description="Low complexity" evidence="4">
    <location>
        <begin position="102"/>
        <end position="118"/>
    </location>
</feature>
<feature type="compositionally biased region" description="Low complexity" evidence="4">
    <location>
        <begin position="139"/>
        <end position="191"/>
    </location>
</feature>
<feature type="compositionally biased region" description="Gly residues" evidence="4">
    <location>
        <begin position="195"/>
        <end position="223"/>
    </location>
</feature>
<feature type="compositionally biased region" description="Basic and acidic residues" evidence="4">
    <location>
        <begin position="224"/>
        <end position="233"/>
    </location>
</feature>
<feature type="compositionally biased region" description="Gly residues" evidence="4">
    <location>
        <begin position="234"/>
        <end position="246"/>
    </location>
</feature>
<feature type="compositionally biased region" description="Basic and acidic residues" evidence="4">
    <location>
        <begin position="551"/>
        <end position="565"/>
    </location>
</feature>
<feature type="compositionally biased region" description="Gly residues" evidence="4">
    <location>
        <begin position="603"/>
        <end position="622"/>
    </location>
</feature>
<feature type="compositionally biased region" description="Low complexity" evidence="4">
    <location>
        <begin position="623"/>
        <end position="635"/>
    </location>
</feature>
<feature type="compositionally biased region" description="Low complexity" evidence="4">
    <location>
        <begin position="642"/>
        <end position="659"/>
    </location>
</feature>
<dbReference type="EMBL" id="AJ298998">
    <property type="protein sequence ID" value="CAC10058.1"/>
    <property type="molecule type" value="mRNA"/>
</dbReference>
<dbReference type="SMR" id="Q9GRW7"/>
<dbReference type="eggNOG" id="KOG0115">
    <property type="taxonomic scope" value="Eukaryota"/>
</dbReference>
<dbReference type="OrthoDB" id="10067824at2759"/>
<dbReference type="ChiTaRS" id="nonA">
    <property type="organism name" value="fly"/>
</dbReference>
<dbReference type="GO" id="GO:0003723">
    <property type="term" value="F:RNA binding"/>
    <property type="evidence" value="ECO:0007669"/>
    <property type="project" value="UniProtKB-KW"/>
</dbReference>
<dbReference type="GO" id="GO:0007601">
    <property type="term" value="P:visual perception"/>
    <property type="evidence" value="ECO:0007669"/>
    <property type="project" value="UniProtKB-KW"/>
</dbReference>
<dbReference type="CDD" id="cd12945">
    <property type="entry name" value="NOPS_NONA_like"/>
    <property type="match status" value="1"/>
</dbReference>
<dbReference type="CDD" id="cd12332">
    <property type="entry name" value="RRM1_p54nrb_like"/>
    <property type="match status" value="1"/>
</dbReference>
<dbReference type="CDD" id="cd12333">
    <property type="entry name" value="RRM2_p54nrb_like"/>
    <property type="match status" value="1"/>
</dbReference>
<dbReference type="FunFam" id="3.30.70.330:FF:000043">
    <property type="entry name" value="paraspeckle component 1 isoform X1"/>
    <property type="match status" value="1"/>
</dbReference>
<dbReference type="FunFam" id="3.30.70.330:FF:000513">
    <property type="entry name" value="Splicing factor, proline-and glutamine-rich"/>
    <property type="match status" value="1"/>
</dbReference>
<dbReference type="Gene3D" id="3.30.70.330">
    <property type="match status" value="2"/>
</dbReference>
<dbReference type="Gene3D" id="6.10.250.1170">
    <property type="match status" value="1"/>
</dbReference>
<dbReference type="InterPro" id="IPR012975">
    <property type="entry name" value="NOPS"/>
</dbReference>
<dbReference type="InterPro" id="IPR012677">
    <property type="entry name" value="Nucleotide-bd_a/b_plait_sf"/>
</dbReference>
<dbReference type="InterPro" id="IPR035979">
    <property type="entry name" value="RBD_domain_sf"/>
</dbReference>
<dbReference type="InterPro" id="IPR000504">
    <property type="entry name" value="RRM_dom"/>
</dbReference>
<dbReference type="PANTHER" id="PTHR23189">
    <property type="entry name" value="RNA RECOGNITION MOTIF-CONTAINING"/>
    <property type="match status" value="1"/>
</dbReference>
<dbReference type="Pfam" id="PF08075">
    <property type="entry name" value="NOPS"/>
    <property type="match status" value="1"/>
</dbReference>
<dbReference type="Pfam" id="PF00076">
    <property type="entry name" value="RRM_1"/>
    <property type="match status" value="2"/>
</dbReference>
<dbReference type="SMART" id="SM00360">
    <property type="entry name" value="RRM"/>
    <property type="match status" value="2"/>
</dbReference>
<dbReference type="SUPFAM" id="SSF54928">
    <property type="entry name" value="RNA-binding domain, RBD"/>
    <property type="match status" value="1"/>
</dbReference>
<dbReference type="PROSITE" id="PS50102">
    <property type="entry name" value="RRM"/>
    <property type="match status" value="2"/>
</dbReference>
<gene>
    <name type="primary">nonA</name>
</gene>